<gene>
    <name evidence="1" type="primary">tig</name>
    <name type="ordered locus">SAV1675</name>
</gene>
<evidence type="ECO:0000255" key="1">
    <source>
        <dbReference type="HAMAP-Rule" id="MF_00303"/>
    </source>
</evidence>
<name>TIG_STAAM</name>
<proteinExistence type="inferred from homology"/>
<sequence>MTATWEKKEGNEGLLTVTVPAEKVNKALDQAFKKVVKQINVPGFRKGKVPRPIFEQRFGVEALYQDAIDILLPDAYGEAIDETDIKPVAQPEVSVTQIEKGKDFIFEATVTVEPEVKLGDYKGLEIEKQETELSDDELQEAIDHSLGHLAEMVVKEDGVVENGDTVNIDFSGSVDGEEFEGGQAEGYDLEIGSGSFIPGFEEQLEGMKVDEEKDVVVTFPEEYHAEELAGKEATFKTKVNEIKFKEVPELTDEIANELDAEANTVDEYKENLRKRLAEQKATDAENVEKEEAITKATDNTTIDIPEAMVNTELDRMVSEFAQRIQQQGLDLQTYFQISGQDETQLREQMKDDAEQRVKTNLTLTAIAEAEKIEATDEDIDKELEKMSKQFNISVEDIKNTLGNTDIIKNDVRIQKVIDLLRDNAKFVEGTKED</sequence>
<dbReference type="EC" id="5.2.1.8" evidence="1"/>
<dbReference type="EMBL" id="BA000017">
    <property type="protein sequence ID" value="BAB57837.1"/>
    <property type="molecule type" value="Genomic_DNA"/>
</dbReference>
<dbReference type="RefSeq" id="WP_000127573.1">
    <property type="nucleotide sequence ID" value="NC_002758.2"/>
</dbReference>
<dbReference type="SMR" id="P66934"/>
<dbReference type="KEGG" id="sav:SAV1675"/>
<dbReference type="HOGENOM" id="CLU_033058_3_2_9"/>
<dbReference type="PhylomeDB" id="P66934"/>
<dbReference type="Proteomes" id="UP000002481">
    <property type="component" value="Chromosome"/>
</dbReference>
<dbReference type="GO" id="GO:0005737">
    <property type="term" value="C:cytoplasm"/>
    <property type="evidence" value="ECO:0007669"/>
    <property type="project" value="UniProtKB-SubCell"/>
</dbReference>
<dbReference type="GO" id="GO:0003755">
    <property type="term" value="F:peptidyl-prolyl cis-trans isomerase activity"/>
    <property type="evidence" value="ECO:0007669"/>
    <property type="project" value="UniProtKB-UniRule"/>
</dbReference>
<dbReference type="GO" id="GO:0044183">
    <property type="term" value="F:protein folding chaperone"/>
    <property type="evidence" value="ECO:0007669"/>
    <property type="project" value="TreeGrafter"/>
</dbReference>
<dbReference type="GO" id="GO:0043022">
    <property type="term" value="F:ribosome binding"/>
    <property type="evidence" value="ECO:0007669"/>
    <property type="project" value="TreeGrafter"/>
</dbReference>
<dbReference type="GO" id="GO:0051083">
    <property type="term" value="P:'de novo' cotranslational protein folding"/>
    <property type="evidence" value="ECO:0007669"/>
    <property type="project" value="TreeGrafter"/>
</dbReference>
<dbReference type="GO" id="GO:0051301">
    <property type="term" value="P:cell division"/>
    <property type="evidence" value="ECO:0007669"/>
    <property type="project" value="UniProtKB-KW"/>
</dbReference>
<dbReference type="GO" id="GO:0061077">
    <property type="term" value="P:chaperone-mediated protein folding"/>
    <property type="evidence" value="ECO:0007669"/>
    <property type="project" value="TreeGrafter"/>
</dbReference>
<dbReference type="GO" id="GO:0015031">
    <property type="term" value="P:protein transport"/>
    <property type="evidence" value="ECO:0007669"/>
    <property type="project" value="UniProtKB-UniRule"/>
</dbReference>
<dbReference type="GO" id="GO:0043335">
    <property type="term" value="P:protein unfolding"/>
    <property type="evidence" value="ECO:0007669"/>
    <property type="project" value="TreeGrafter"/>
</dbReference>
<dbReference type="FunFam" id="3.10.50.40:FF:000001">
    <property type="entry name" value="Trigger factor"/>
    <property type="match status" value="1"/>
</dbReference>
<dbReference type="FunFam" id="3.30.70.1050:FF:000002">
    <property type="entry name" value="Trigger factor"/>
    <property type="match status" value="1"/>
</dbReference>
<dbReference type="Gene3D" id="3.10.50.40">
    <property type="match status" value="1"/>
</dbReference>
<dbReference type="Gene3D" id="3.30.70.1050">
    <property type="entry name" value="Trigger factor ribosome-binding domain"/>
    <property type="match status" value="1"/>
</dbReference>
<dbReference type="Gene3D" id="1.10.3120.10">
    <property type="entry name" value="Trigger factor, C-terminal domain"/>
    <property type="match status" value="1"/>
</dbReference>
<dbReference type="HAMAP" id="MF_00303">
    <property type="entry name" value="Trigger_factor_Tig"/>
    <property type="match status" value="1"/>
</dbReference>
<dbReference type="InterPro" id="IPR046357">
    <property type="entry name" value="PPIase_dom_sf"/>
</dbReference>
<dbReference type="InterPro" id="IPR001179">
    <property type="entry name" value="PPIase_FKBP_dom"/>
</dbReference>
<dbReference type="InterPro" id="IPR005215">
    <property type="entry name" value="Trig_fac"/>
</dbReference>
<dbReference type="InterPro" id="IPR008880">
    <property type="entry name" value="Trigger_fac_C"/>
</dbReference>
<dbReference type="InterPro" id="IPR037041">
    <property type="entry name" value="Trigger_fac_C_sf"/>
</dbReference>
<dbReference type="InterPro" id="IPR008881">
    <property type="entry name" value="Trigger_fac_ribosome-bd_bac"/>
</dbReference>
<dbReference type="InterPro" id="IPR036611">
    <property type="entry name" value="Trigger_fac_ribosome-bd_sf"/>
</dbReference>
<dbReference type="InterPro" id="IPR027304">
    <property type="entry name" value="Trigger_fact/SurA_dom_sf"/>
</dbReference>
<dbReference type="NCBIfam" id="TIGR00115">
    <property type="entry name" value="tig"/>
    <property type="match status" value="1"/>
</dbReference>
<dbReference type="PANTHER" id="PTHR30560">
    <property type="entry name" value="TRIGGER FACTOR CHAPERONE AND PEPTIDYL-PROLYL CIS/TRANS ISOMERASE"/>
    <property type="match status" value="1"/>
</dbReference>
<dbReference type="PANTHER" id="PTHR30560:SF3">
    <property type="entry name" value="TRIGGER FACTOR-LIKE PROTEIN TIG, CHLOROPLASTIC"/>
    <property type="match status" value="1"/>
</dbReference>
<dbReference type="Pfam" id="PF00254">
    <property type="entry name" value="FKBP_C"/>
    <property type="match status" value="1"/>
</dbReference>
<dbReference type="Pfam" id="PF05698">
    <property type="entry name" value="Trigger_C"/>
    <property type="match status" value="1"/>
</dbReference>
<dbReference type="Pfam" id="PF05697">
    <property type="entry name" value="Trigger_N"/>
    <property type="match status" value="1"/>
</dbReference>
<dbReference type="PIRSF" id="PIRSF003095">
    <property type="entry name" value="Trigger_factor"/>
    <property type="match status" value="1"/>
</dbReference>
<dbReference type="SUPFAM" id="SSF54534">
    <property type="entry name" value="FKBP-like"/>
    <property type="match status" value="1"/>
</dbReference>
<dbReference type="SUPFAM" id="SSF109998">
    <property type="entry name" value="Triger factor/SurA peptide-binding domain-like"/>
    <property type="match status" value="1"/>
</dbReference>
<dbReference type="SUPFAM" id="SSF102735">
    <property type="entry name" value="Trigger factor ribosome-binding domain"/>
    <property type="match status" value="1"/>
</dbReference>
<dbReference type="PROSITE" id="PS50059">
    <property type="entry name" value="FKBP_PPIASE"/>
    <property type="match status" value="1"/>
</dbReference>
<organism>
    <name type="scientific">Staphylococcus aureus (strain Mu50 / ATCC 700699)</name>
    <dbReference type="NCBI Taxonomy" id="158878"/>
    <lineage>
        <taxon>Bacteria</taxon>
        <taxon>Bacillati</taxon>
        <taxon>Bacillota</taxon>
        <taxon>Bacilli</taxon>
        <taxon>Bacillales</taxon>
        <taxon>Staphylococcaceae</taxon>
        <taxon>Staphylococcus</taxon>
    </lineage>
</organism>
<accession>P66934</accession>
<accession>Q99TI6</accession>
<reference key="1">
    <citation type="journal article" date="2001" name="Lancet">
        <title>Whole genome sequencing of meticillin-resistant Staphylococcus aureus.</title>
        <authorList>
            <person name="Kuroda M."/>
            <person name="Ohta T."/>
            <person name="Uchiyama I."/>
            <person name="Baba T."/>
            <person name="Yuzawa H."/>
            <person name="Kobayashi I."/>
            <person name="Cui L."/>
            <person name="Oguchi A."/>
            <person name="Aoki K."/>
            <person name="Nagai Y."/>
            <person name="Lian J.-Q."/>
            <person name="Ito T."/>
            <person name="Kanamori M."/>
            <person name="Matsumaru H."/>
            <person name="Maruyama A."/>
            <person name="Murakami H."/>
            <person name="Hosoyama A."/>
            <person name="Mizutani-Ui Y."/>
            <person name="Takahashi N.K."/>
            <person name="Sawano T."/>
            <person name="Inoue R."/>
            <person name="Kaito C."/>
            <person name="Sekimizu K."/>
            <person name="Hirakawa H."/>
            <person name="Kuhara S."/>
            <person name="Goto S."/>
            <person name="Yabuzaki J."/>
            <person name="Kanehisa M."/>
            <person name="Yamashita A."/>
            <person name="Oshima K."/>
            <person name="Furuya K."/>
            <person name="Yoshino C."/>
            <person name="Shiba T."/>
            <person name="Hattori M."/>
            <person name="Ogasawara N."/>
            <person name="Hayashi H."/>
            <person name="Hiramatsu K."/>
        </authorList>
    </citation>
    <scope>NUCLEOTIDE SEQUENCE [LARGE SCALE GENOMIC DNA]</scope>
    <source>
        <strain>Mu50 / ATCC 700699</strain>
    </source>
</reference>
<comment type="function">
    <text evidence="1">Involved in protein export. Acts as a chaperone by maintaining the newly synthesized protein in an open conformation. Functions as a peptidyl-prolyl cis-trans isomerase.</text>
</comment>
<comment type="catalytic activity">
    <reaction evidence="1">
        <text>[protein]-peptidylproline (omega=180) = [protein]-peptidylproline (omega=0)</text>
        <dbReference type="Rhea" id="RHEA:16237"/>
        <dbReference type="Rhea" id="RHEA-COMP:10747"/>
        <dbReference type="Rhea" id="RHEA-COMP:10748"/>
        <dbReference type="ChEBI" id="CHEBI:83833"/>
        <dbReference type="ChEBI" id="CHEBI:83834"/>
        <dbReference type="EC" id="5.2.1.8"/>
    </reaction>
</comment>
<comment type="subcellular location">
    <subcellularLocation>
        <location>Cytoplasm</location>
    </subcellularLocation>
    <text evidence="1">About half TF is bound to the ribosome near the polypeptide exit tunnel while the other half is free in the cytoplasm.</text>
</comment>
<comment type="domain">
    <text evidence="1">Consists of 3 domains; the N-terminus binds the ribosome, the middle domain has PPIase activity, while the C-terminus has intrinsic chaperone activity on its own.</text>
</comment>
<comment type="similarity">
    <text evidence="1">Belongs to the FKBP-type PPIase family. Tig subfamily.</text>
</comment>
<keyword id="KW-0131">Cell cycle</keyword>
<keyword id="KW-0132">Cell division</keyword>
<keyword id="KW-0143">Chaperone</keyword>
<keyword id="KW-0963">Cytoplasm</keyword>
<keyword id="KW-0413">Isomerase</keyword>
<keyword id="KW-0697">Rotamase</keyword>
<feature type="chain" id="PRO_0000179426" description="Trigger factor">
    <location>
        <begin position="1"/>
        <end position="433"/>
    </location>
</feature>
<feature type="domain" description="PPIase FKBP-type" evidence="1">
    <location>
        <begin position="163"/>
        <end position="248"/>
    </location>
</feature>
<protein>
    <recommendedName>
        <fullName evidence="1">Trigger factor</fullName>
        <shortName evidence="1">TF</shortName>
        <ecNumber evidence="1">5.2.1.8</ecNumber>
    </recommendedName>
    <alternativeName>
        <fullName evidence="1">PPIase</fullName>
    </alternativeName>
</protein>